<organism>
    <name type="scientific">Pyrobaculum aerophilum (strain ATCC 51768 / DSM 7523 / JCM 9630 / CIP 104966 / NBRC 100827 / IM2)</name>
    <dbReference type="NCBI Taxonomy" id="178306"/>
    <lineage>
        <taxon>Archaea</taxon>
        <taxon>Thermoproteota</taxon>
        <taxon>Thermoprotei</taxon>
        <taxon>Thermoproteales</taxon>
        <taxon>Thermoproteaceae</taxon>
        <taxon>Pyrobaculum</taxon>
    </lineage>
</organism>
<accession>Q8ZTX6</accession>
<keyword id="KW-0002">3D-structure</keyword>
<keyword id="KW-1185">Reference proteome</keyword>
<keyword id="KW-0687">Ribonucleoprotein</keyword>
<keyword id="KW-0689">Ribosomal protein</keyword>
<name>RL39_PYRAE</name>
<gene>
    <name type="primary">rpl39e</name>
    <name type="ordered locus">PAE3044.1</name>
    <name type="ORF">PAE3044A</name>
</gene>
<proteinExistence type="evidence at protein level"/>
<evidence type="ECO:0000305" key="1"/>
<evidence type="ECO:0007829" key="2">
    <source>
        <dbReference type="PDB" id="2N9R"/>
    </source>
</evidence>
<dbReference type="EMBL" id="AE009441">
    <property type="protein sequence ID" value="AAL64633.1"/>
    <property type="status" value="ALT_FRAME"/>
    <property type="molecule type" value="Genomic_DNA"/>
</dbReference>
<dbReference type="PDB" id="2N9R">
    <property type="method" value="NMR"/>
    <property type="chains" value="A=4-18"/>
</dbReference>
<dbReference type="PDB" id="6CSK">
    <property type="method" value="NMR"/>
    <property type="chains" value="A=1-18"/>
</dbReference>
<dbReference type="PDB" id="6CSZ">
    <property type="method" value="NMR"/>
    <property type="chains" value="A=1-18"/>
</dbReference>
<dbReference type="PDB" id="6CT1">
    <property type="method" value="NMR"/>
    <property type="chains" value="A=1-18"/>
</dbReference>
<dbReference type="PDBsum" id="2N9R"/>
<dbReference type="PDBsum" id="6CSK"/>
<dbReference type="PDBsum" id="6CSZ"/>
<dbReference type="PDBsum" id="6CT1"/>
<dbReference type="BMRB" id="Q8ZTX6"/>
<dbReference type="SMR" id="Q8ZTX6"/>
<dbReference type="FunCoup" id="Q8ZTX6">
    <property type="interactions" value="103"/>
</dbReference>
<dbReference type="STRING" id="178306.PAE3044a"/>
<dbReference type="EnsemblBacteria" id="AAL64633">
    <property type="protein sequence ID" value="AAL64633"/>
    <property type="gene ID" value="PAE3044a"/>
</dbReference>
<dbReference type="KEGG" id="pai:PAE3044a"/>
<dbReference type="HOGENOM" id="CLU_3430766_0_0_2"/>
<dbReference type="InParanoid" id="Q8ZTX6"/>
<dbReference type="Proteomes" id="UP000002439">
    <property type="component" value="Chromosome"/>
</dbReference>
<dbReference type="GO" id="GO:0022625">
    <property type="term" value="C:cytosolic large ribosomal subunit"/>
    <property type="evidence" value="ECO:0000318"/>
    <property type="project" value="GO_Central"/>
</dbReference>
<dbReference type="GO" id="GO:0003735">
    <property type="term" value="F:structural constituent of ribosome"/>
    <property type="evidence" value="ECO:0007669"/>
    <property type="project" value="InterPro"/>
</dbReference>
<dbReference type="GO" id="GO:0006412">
    <property type="term" value="P:translation"/>
    <property type="evidence" value="ECO:0007669"/>
    <property type="project" value="UniProtKB-UniRule"/>
</dbReference>
<dbReference type="FunFam" id="1.10.1620.10:FF:000001">
    <property type="entry name" value="60S ribosomal protein-like L39"/>
    <property type="match status" value="1"/>
</dbReference>
<dbReference type="Gene3D" id="1.10.1620.10">
    <property type="entry name" value="Ribosomal protein L39e"/>
    <property type="match status" value="1"/>
</dbReference>
<dbReference type="HAMAP" id="MF_00629">
    <property type="entry name" value="Ribosomal_eL39"/>
    <property type="match status" value="1"/>
</dbReference>
<dbReference type="InterPro" id="IPR000077">
    <property type="entry name" value="Ribosomal_eL39"/>
</dbReference>
<dbReference type="InterPro" id="IPR020083">
    <property type="entry name" value="Ribosomal_eL39_CS"/>
</dbReference>
<dbReference type="InterPro" id="IPR023626">
    <property type="entry name" value="Ribosomal_eL39_dom_sf"/>
</dbReference>
<dbReference type="NCBIfam" id="NF002316">
    <property type="entry name" value="PRK01242.1"/>
    <property type="match status" value="1"/>
</dbReference>
<dbReference type="Pfam" id="PF00832">
    <property type="entry name" value="Ribosomal_L39"/>
    <property type="match status" value="1"/>
</dbReference>
<dbReference type="SUPFAM" id="SSF48662">
    <property type="entry name" value="Ribosomal protein L39e"/>
    <property type="match status" value="1"/>
</dbReference>
<dbReference type="PROSITE" id="PS00051">
    <property type="entry name" value="RIBOSOMAL_L39E"/>
    <property type="match status" value="1"/>
</dbReference>
<protein>
    <recommendedName>
        <fullName evidence="1">Large ribosomal subunit protein eL39</fullName>
    </recommendedName>
    <alternativeName>
        <fullName>50S ribosomal protein L39e</fullName>
    </alternativeName>
</protein>
<feature type="chain" id="PRO_0000127057" description="Large ribosomal subunit protein eL39">
    <location>
        <begin position="1"/>
        <end position="51"/>
    </location>
</feature>
<feature type="helix" evidence="2">
    <location>
        <begin position="4"/>
        <end position="17"/>
    </location>
</feature>
<reference key="1">
    <citation type="journal article" date="2002" name="Proc. Natl. Acad. Sci. U.S.A.">
        <title>Genome sequence of the hyperthermophilic crenarchaeon Pyrobaculum aerophilum.</title>
        <authorList>
            <person name="Fitz-Gibbon S.T."/>
            <person name="Ladner H."/>
            <person name="Kim U.-J."/>
            <person name="Stetter K.O."/>
            <person name="Simon M.I."/>
            <person name="Miller J.H."/>
        </authorList>
    </citation>
    <scope>NUCLEOTIDE SEQUENCE [LARGE SCALE GENOMIC DNA]</scope>
    <source>
        <strain>ATCC 51768 / DSM 7523 / JCM 9630 / CIP 104966 / NBRC 100827 / IM2</strain>
    </source>
</reference>
<sequence length="51" mass="6056">MARNKPLGKKLRLAAAFKXNRNPPVWVVVKTKRRVTRSPARRHWRRVKLKA</sequence>
<comment type="similarity">
    <text evidence="1">Belongs to the eukaryotic ribosomal protein eL39 family.</text>
</comment>
<comment type="sequence caution" evidence="1">
    <conflict type="frameshift">
        <sequence resource="EMBL-CDS" id="AAL64633"/>
    </conflict>
</comment>